<organism>
    <name type="scientific">Shigella sonnei (strain Ss046)</name>
    <dbReference type="NCBI Taxonomy" id="300269"/>
    <lineage>
        <taxon>Bacteria</taxon>
        <taxon>Pseudomonadati</taxon>
        <taxon>Pseudomonadota</taxon>
        <taxon>Gammaproteobacteria</taxon>
        <taxon>Enterobacterales</taxon>
        <taxon>Enterobacteriaceae</taxon>
        <taxon>Shigella</taxon>
    </lineage>
</organism>
<accession>Q3YYG6</accession>
<sequence>MSKSTAEIRQAFLDFFHSKGHQVVASSSLVPHNDPTLLFTNAGMNQFKDVFLGLDKRNYSRATTSQRCVRAGGKHNDLENVGYTARHHTFFEMLGNFSFGDYFKHDAIQFAWELLTSEKWFALPKERLWVTVYESDDEAYEIWEKEVGIPRERIIRIGDNKGAPYASDNFWQMGDTGPCGPCTEIFYDHGDHIWGGPPGSPEEDGDRYIEIWNIVFMQFNRQADGTMEPLPKPSVDTGMGLERIAAVLQHVNSNYDIDLFRTLIQAVAKVTGATDLSNKSLRVIADHIRSCAFLIADGVMPSNENRGYVLRRIIRRAVRHGNMLGAKETFFYKLVGPLIDVMGSAGEDLKRQQAQVEQVLKTEEEQFARTLERGLALLDEELAKLSGDTLDGETAFRLYDTYGFPVDLTADVCRERNIKVDEAGFEAAMEEQRRRAREASGFGADYNAMIRVDSASEFKGYDHLELNGKVTALFVDGKAVDAINAGQEAVVVLDQTPFYAESGGQVGDKGELKGANFSFAVEDTQKYGQAIGHIGKLAAGSLKVGDAVQADVDEARRARIRLNHSATHLMHAALRQVLGTHVSQKGSLVNDKVLRFDFSHNEAMKPEEIRAVEDLVNAQIRRNLPIETNIMDLEAAKAKGAMALFGEKYDERVRVLSMGDFSTELCGGTHASRTGDIGLFRIISESGTAAGVRRIEAVTGEGAITTVHADSDRLSEVAHLLKGDSNNLADKVRSVLERTRQLEKELQQLKEQAAAQESANLSSKAIDVNGVKLLVSELSGVEPKMLRTMVDDLKNQLGSTIIVLATVAEGKVSLIAGVSKDVTDRVKAGELIGMVAQQVGGKGGGRPDMAQAGGTDAAALPAALASVKGWVSAKLQ</sequence>
<feature type="chain" id="PRO_0000347800" description="Alanine--tRNA ligase">
    <location>
        <begin position="1"/>
        <end position="876"/>
    </location>
</feature>
<feature type="binding site" evidence="1">
    <location>
        <position position="564"/>
    </location>
    <ligand>
        <name>Zn(2+)</name>
        <dbReference type="ChEBI" id="CHEBI:29105"/>
    </ligand>
</feature>
<feature type="binding site" evidence="1">
    <location>
        <position position="568"/>
    </location>
    <ligand>
        <name>Zn(2+)</name>
        <dbReference type="ChEBI" id="CHEBI:29105"/>
    </ligand>
</feature>
<feature type="binding site" evidence="1">
    <location>
        <position position="666"/>
    </location>
    <ligand>
        <name>Zn(2+)</name>
        <dbReference type="ChEBI" id="CHEBI:29105"/>
    </ligand>
</feature>
<feature type="binding site" evidence="1">
    <location>
        <position position="670"/>
    </location>
    <ligand>
        <name>Zn(2+)</name>
        <dbReference type="ChEBI" id="CHEBI:29105"/>
    </ligand>
</feature>
<feature type="modified residue" description="N6-acetyllysine" evidence="1">
    <location>
        <position position="74"/>
    </location>
</feature>
<reference key="1">
    <citation type="journal article" date="2005" name="Nucleic Acids Res.">
        <title>Genome dynamics and diversity of Shigella species, the etiologic agents of bacillary dysentery.</title>
        <authorList>
            <person name="Yang F."/>
            <person name="Yang J."/>
            <person name="Zhang X."/>
            <person name="Chen L."/>
            <person name="Jiang Y."/>
            <person name="Yan Y."/>
            <person name="Tang X."/>
            <person name="Wang J."/>
            <person name="Xiong Z."/>
            <person name="Dong J."/>
            <person name="Xue Y."/>
            <person name="Zhu Y."/>
            <person name="Xu X."/>
            <person name="Sun L."/>
            <person name="Chen S."/>
            <person name="Nie H."/>
            <person name="Peng J."/>
            <person name="Xu J."/>
            <person name="Wang Y."/>
            <person name="Yuan Z."/>
            <person name="Wen Y."/>
            <person name="Yao Z."/>
            <person name="Shen Y."/>
            <person name="Qiang B."/>
            <person name="Hou Y."/>
            <person name="Yu J."/>
            <person name="Jin Q."/>
        </authorList>
    </citation>
    <scope>NUCLEOTIDE SEQUENCE [LARGE SCALE GENOMIC DNA]</scope>
    <source>
        <strain>Ss046</strain>
    </source>
</reference>
<proteinExistence type="inferred from homology"/>
<keyword id="KW-0007">Acetylation</keyword>
<keyword id="KW-0030">Aminoacyl-tRNA synthetase</keyword>
<keyword id="KW-0067">ATP-binding</keyword>
<keyword id="KW-0963">Cytoplasm</keyword>
<keyword id="KW-0436">Ligase</keyword>
<keyword id="KW-0479">Metal-binding</keyword>
<keyword id="KW-0547">Nucleotide-binding</keyword>
<keyword id="KW-0648">Protein biosynthesis</keyword>
<keyword id="KW-1185">Reference proteome</keyword>
<keyword id="KW-0694">RNA-binding</keyword>
<keyword id="KW-0820">tRNA-binding</keyword>
<keyword id="KW-0862">Zinc</keyword>
<comment type="function">
    <text evidence="1">Catalyzes the attachment of alanine to tRNA(Ala) in a two-step reaction: alanine is first activated by ATP to form Ala-AMP and then transferred to the acceptor end of tRNA(Ala). Also edits incorrectly charged Ser-tRNA(Ala) and Gly-tRNA(Ala) via its editing domain.</text>
</comment>
<comment type="catalytic activity">
    <reaction evidence="1">
        <text>tRNA(Ala) + L-alanine + ATP = L-alanyl-tRNA(Ala) + AMP + diphosphate</text>
        <dbReference type="Rhea" id="RHEA:12540"/>
        <dbReference type="Rhea" id="RHEA-COMP:9657"/>
        <dbReference type="Rhea" id="RHEA-COMP:9923"/>
        <dbReference type="ChEBI" id="CHEBI:30616"/>
        <dbReference type="ChEBI" id="CHEBI:33019"/>
        <dbReference type="ChEBI" id="CHEBI:57972"/>
        <dbReference type="ChEBI" id="CHEBI:78442"/>
        <dbReference type="ChEBI" id="CHEBI:78497"/>
        <dbReference type="ChEBI" id="CHEBI:456215"/>
        <dbReference type="EC" id="6.1.1.7"/>
    </reaction>
</comment>
<comment type="cofactor">
    <cofactor evidence="1">
        <name>Zn(2+)</name>
        <dbReference type="ChEBI" id="CHEBI:29105"/>
    </cofactor>
    <text evidence="1">Binds 1 zinc ion per subunit.</text>
</comment>
<comment type="subunit">
    <text evidence="1">Homotetramer.</text>
</comment>
<comment type="subcellular location">
    <subcellularLocation>
        <location evidence="1">Cytoplasm</location>
    </subcellularLocation>
</comment>
<comment type="domain">
    <text evidence="1">Consists of three domains; the N-terminal catalytic domain, the editing domain and the C-terminal C-Ala domain. The editing domain removes incorrectly charged amino acids, while the C-Ala domain, along with tRNA(Ala), serves as a bridge to cooperatively bring together the editing and aminoacylation centers thus stimulating deacylation of misacylated tRNAs.</text>
</comment>
<comment type="similarity">
    <text evidence="1">Belongs to the class-II aminoacyl-tRNA synthetase family.</text>
</comment>
<gene>
    <name evidence="1" type="primary">alaS</name>
    <name type="ordered locus">SSON_2841</name>
</gene>
<protein>
    <recommendedName>
        <fullName evidence="1">Alanine--tRNA ligase</fullName>
        <ecNumber evidence="1">6.1.1.7</ecNumber>
    </recommendedName>
    <alternativeName>
        <fullName evidence="1">Alanyl-tRNA synthetase</fullName>
        <shortName evidence="1">AlaRS</shortName>
    </alternativeName>
</protein>
<name>SYA_SHISS</name>
<evidence type="ECO:0000255" key="1">
    <source>
        <dbReference type="HAMAP-Rule" id="MF_00036"/>
    </source>
</evidence>
<dbReference type="EC" id="6.1.1.7" evidence="1"/>
<dbReference type="EMBL" id="CP000038">
    <property type="protein sequence ID" value="AAZ89446.1"/>
    <property type="molecule type" value="Genomic_DNA"/>
</dbReference>
<dbReference type="RefSeq" id="WP_000047176.1">
    <property type="nucleotide sequence ID" value="NC_007384.1"/>
</dbReference>
<dbReference type="SMR" id="Q3YYG6"/>
<dbReference type="GeneID" id="93779314"/>
<dbReference type="KEGG" id="ssn:SSON_2841"/>
<dbReference type="HOGENOM" id="CLU_004485_1_1_6"/>
<dbReference type="Proteomes" id="UP000002529">
    <property type="component" value="Chromosome"/>
</dbReference>
<dbReference type="GO" id="GO:0005829">
    <property type="term" value="C:cytosol"/>
    <property type="evidence" value="ECO:0007669"/>
    <property type="project" value="TreeGrafter"/>
</dbReference>
<dbReference type="GO" id="GO:0004813">
    <property type="term" value="F:alanine-tRNA ligase activity"/>
    <property type="evidence" value="ECO:0007669"/>
    <property type="project" value="UniProtKB-UniRule"/>
</dbReference>
<dbReference type="GO" id="GO:0002161">
    <property type="term" value="F:aminoacyl-tRNA deacylase activity"/>
    <property type="evidence" value="ECO:0007669"/>
    <property type="project" value="TreeGrafter"/>
</dbReference>
<dbReference type="GO" id="GO:0005524">
    <property type="term" value="F:ATP binding"/>
    <property type="evidence" value="ECO:0007669"/>
    <property type="project" value="UniProtKB-UniRule"/>
</dbReference>
<dbReference type="GO" id="GO:0000049">
    <property type="term" value="F:tRNA binding"/>
    <property type="evidence" value="ECO:0007669"/>
    <property type="project" value="UniProtKB-KW"/>
</dbReference>
<dbReference type="GO" id="GO:0008270">
    <property type="term" value="F:zinc ion binding"/>
    <property type="evidence" value="ECO:0007669"/>
    <property type="project" value="UniProtKB-UniRule"/>
</dbReference>
<dbReference type="GO" id="GO:0006419">
    <property type="term" value="P:alanyl-tRNA aminoacylation"/>
    <property type="evidence" value="ECO:0007669"/>
    <property type="project" value="UniProtKB-UniRule"/>
</dbReference>
<dbReference type="GO" id="GO:0045892">
    <property type="term" value="P:negative regulation of DNA-templated transcription"/>
    <property type="evidence" value="ECO:0007669"/>
    <property type="project" value="TreeGrafter"/>
</dbReference>
<dbReference type="CDD" id="cd00673">
    <property type="entry name" value="AlaRS_core"/>
    <property type="match status" value="1"/>
</dbReference>
<dbReference type="FunFam" id="2.40.30.130:FF:000001">
    <property type="entry name" value="Alanine--tRNA ligase"/>
    <property type="match status" value="1"/>
</dbReference>
<dbReference type="FunFam" id="3.10.310.40:FF:000001">
    <property type="entry name" value="Alanine--tRNA ligase"/>
    <property type="match status" value="1"/>
</dbReference>
<dbReference type="FunFam" id="3.30.54.20:FF:000001">
    <property type="entry name" value="Alanine--tRNA ligase"/>
    <property type="match status" value="1"/>
</dbReference>
<dbReference type="FunFam" id="3.30.930.10:FF:000004">
    <property type="entry name" value="Alanine--tRNA ligase"/>
    <property type="match status" value="1"/>
</dbReference>
<dbReference type="FunFam" id="3.30.980.10:FF:000004">
    <property type="entry name" value="Alanine--tRNA ligase, cytoplasmic"/>
    <property type="match status" value="1"/>
</dbReference>
<dbReference type="Gene3D" id="2.40.30.130">
    <property type="match status" value="1"/>
</dbReference>
<dbReference type="Gene3D" id="3.10.310.40">
    <property type="match status" value="1"/>
</dbReference>
<dbReference type="Gene3D" id="3.30.54.20">
    <property type="match status" value="1"/>
</dbReference>
<dbReference type="Gene3D" id="6.10.250.550">
    <property type="match status" value="1"/>
</dbReference>
<dbReference type="Gene3D" id="3.30.930.10">
    <property type="entry name" value="Bira Bifunctional Protein, Domain 2"/>
    <property type="match status" value="1"/>
</dbReference>
<dbReference type="Gene3D" id="3.30.980.10">
    <property type="entry name" value="Threonyl-trna Synthetase, Chain A, domain 2"/>
    <property type="match status" value="1"/>
</dbReference>
<dbReference type="HAMAP" id="MF_00036_B">
    <property type="entry name" value="Ala_tRNA_synth_B"/>
    <property type="match status" value="1"/>
</dbReference>
<dbReference type="InterPro" id="IPR045864">
    <property type="entry name" value="aa-tRNA-synth_II/BPL/LPL"/>
</dbReference>
<dbReference type="InterPro" id="IPR002318">
    <property type="entry name" value="Ala-tRNA-lgiase_IIc"/>
</dbReference>
<dbReference type="InterPro" id="IPR018162">
    <property type="entry name" value="Ala-tRNA-ligase_IIc_anticod-bd"/>
</dbReference>
<dbReference type="InterPro" id="IPR018165">
    <property type="entry name" value="Ala-tRNA-synth_IIc_core"/>
</dbReference>
<dbReference type="InterPro" id="IPR018164">
    <property type="entry name" value="Ala-tRNA-synth_IIc_N"/>
</dbReference>
<dbReference type="InterPro" id="IPR050058">
    <property type="entry name" value="Ala-tRNA_ligase"/>
</dbReference>
<dbReference type="InterPro" id="IPR023033">
    <property type="entry name" value="Ala_tRNA_ligase_euk/bac"/>
</dbReference>
<dbReference type="InterPro" id="IPR003156">
    <property type="entry name" value="DHHA1_dom"/>
</dbReference>
<dbReference type="InterPro" id="IPR018163">
    <property type="entry name" value="Thr/Ala-tRNA-synth_IIc_edit"/>
</dbReference>
<dbReference type="InterPro" id="IPR009000">
    <property type="entry name" value="Transl_B-barrel_sf"/>
</dbReference>
<dbReference type="InterPro" id="IPR012947">
    <property type="entry name" value="tRNA_SAD"/>
</dbReference>
<dbReference type="NCBIfam" id="TIGR00344">
    <property type="entry name" value="alaS"/>
    <property type="match status" value="1"/>
</dbReference>
<dbReference type="PANTHER" id="PTHR11777:SF9">
    <property type="entry name" value="ALANINE--TRNA LIGASE, CYTOPLASMIC"/>
    <property type="match status" value="1"/>
</dbReference>
<dbReference type="PANTHER" id="PTHR11777">
    <property type="entry name" value="ALANYL-TRNA SYNTHETASE"/>
    <property type="match status" value="1"/>
</dbReference>
<dbReference type="Pfam" id="PF02272">
    <property type="entry name" value="DHHA1"/>
    <property type="match status" value="1"/>
</dbReference>
<dbReference type="Pfam" id="PF01411">
    <property type="entry name" value="tRNA-synt_2c"/>
    <property type="match status" value="1"/>
</dbReference>
<dbReference type="Pfam" id="PF07973">
    <property type="entry name" value="tRNA_SAD"/>
    <property type="match status" value="1"/>
</dbReference>
<dbReference type="PRINTS" id="PR00980">
    <property type="entry name" value="TRNASYNTHALA"/>
</dbReference>
<dbReference type="SMART" id="SM00863">
    <property type="entry name" value="tRNA_SAD"/>
    <property type="match status" value="1"/>
</dbReference>
<dbReference type="SUPFAM" id="SSF55681">
    <property type="entry name" value="Class II aaRS and biotin synthetases"/>
    <property type="match status" value="1"/>
</dbReference>
<dbReference type="SUPFAM" id="SSF101353">
    <property type="entry name" value="Putative anticodon-binding domain of alanyl-tRNA synthetase (AlaRS)"/>
    <property type="match status" value="1"/>
</dbReference>
<dbReference type="SUPFAM" id="SSF55186">
    <property type="entry name" value="ThrRS/AlaRS common domain"/>
    <property type="match status" value="1"/>
</dbReference>
<dbReference type="SUPFAM" id="SSF50447">
    <property type="entry name" value="Translation proteins"/>
    <property type="match status" value="1"/>
</dbReference>
<dbReference type="PROSITE" id="PS50860">
    <property type="entry name" value="AA_TRNA_LIGASE_II_ALA"/>
    <property type="match status" value="1"/>
</dbReference>